<sequence>MESKATASGSFLENIIGKPVYVKLFSGILYQGKLESIDGFMNVTMSQVSEHYEAEENGTLHKYPSEVFLRGSQVLYISEK</sequence>
<gene>
    <name type="primary">LSM6</name>
    <name type="ordered locus">KLLA0E02530g</name>
</gene>
<reference key="1">
    <citation type="journal article" date="2004" name="Nature">
        <title>Genome evolution in yeasts.</title>
        <authorList>
            <person name="Dujon B."/>
            <person name="Sherman D."/>
            <person name="Fischer G."/>
            <person name="Durrens P."/>
            <person name="Casaregola S."/>
            <person name="Lafontaine I."/>
            <person name="de Montigny J."/>
            <person name="Marck C."/>
            <person name="Neuveglise C."/>
            <person name="Talla E."/>
            <person name="Goffard N."/>
            <person name="Frangeul L."/>
            <person name="Aigle M."/>
            <person name="Anthouard V."/>
            <person name="Babour A."/>
            <person name="Barbe V."/>
            <person name="Barnay S."/>
            <person name="Blanchin S."/>
            <person name="Beckerich J.-M."/>
            <person name="Beyne E."/>
            <person name="Bleykasten C."/>
            <person name="Boisrame A."/>
            <person name="Boyer J."/>
            <person name="Cattolico L."/>
            <person name="Confanioleri F."/>
            <person name="de Daruvar A."/>
            <person name="Despons L."/>
            <person name="Fabre E."/>
            <person name="Fairhead C."/>
            <person name="Ferry-Dumazet H."/>
            <person name="Groppi A."/>
            <person name="Hantraye F."/>
            <person name="Hennequin C."/>
            <person name="Jauniaux N."/>
            <person name="Joyet P."/>
            <person name="Kachouri R."/>
            <person name="Kerrest A."/>
            <person name="Koszul R."/>
            <person name="Lemaire M."/>
            <person name="Lesur I."/>
            <person name="Ma L."/>
            <person name="Muller H."/>
            <person name="Nicaud J.-M."/>
            <person name="Nikolski M."/>
            <person name="Oztas S."/>
            <person name="Ozier-Kalogeropoulos O."/>
            <person name="Pellenz S."/>
            <person name="Potier S."/>
            <person name="Richard G.-F."/>
            <person name="Straub M.-L."/>
            <person name="Suleau A."/>
            <person name="Swennen D."/>
            <person name="Tekaia F."/>
            <person name="Wesolowski-Louvel M."/>
            <person name="Westhof E."/>
            <person name="Wirth B."/>
            <person name="Zeniou-Meyer M."/>
            <person name="Zivanovic Y."/>
            <person name="Bolotin-Fukuhara M."/>
            <person name="Thierry A."/>
            <person name="Bouchier C."/>
            <person name="Caudron B."/>
            <person name="Scarpelli C."/>
            <person name="Gaillardin C."/>
            <person name="Weissenbach J."/>
            <person name="Wincker P."/>
            <person name="Souciet J.-L."/>
        </authorList>
    </citation>
    <scope>NUCLEOTIDE SEQUENCE [LARGE SCALE GENOMIC DNA]</scope>
    <source>
        <strain>ATCC 8585 / CBS 2359 / DSM 70799 / NBRC 1267 / NRRL Y-1140 / WM37</strain>
    </source>
</reference>
<accession>Q6CPS7</accession>
<dbReference type="EMBL" id="CR382125">
    <property type="protein sequence ID" value="CAG99149.1"/>
    <property type="molecule type" value="Genomic_DNA"/>
</dbReference>
<dbReference type="RefSeq" id="XP_454062.1">
    <property type="nucleotide sequence ID" value="XM_454062.1"/>
</dbReference>
<dbReference type="SMR" id="Q6CPS7"/>
<dbReference type="FunCoup" id="Q6CPS7">
    <property type="interactions" value="892"/>
</dbReference>
<dbReference type="STRING" id="284590.Q6CPS7"/>
<dbReference type="PaxDb" id="284590-Q6CPS7"/>
<dbReference type="KEGG" id="kla:KLLA0_E02575g"/>
<dbReference type="eggNOG" id="KOG1783">
    <property type="taxonomic scope" value="Eukaryota"/>
</dbReference>
<dbReference type="HOGENOM" id="CLU_076902_7_1_1"/>
<dbReference type="InParanoid" id="Q6CPS7"/>
<dbReference type="OMA" id="MYISEQK"/>
<dbReference type="Proteomes" id="UP000000598">
    <property type="component" value="Chromosome E"/>
</dbReference>
<dbReference type="GO" id="GO:0005730">
    <property type="term" value="C:nucleolus"/>
    <property type="evidence" value="ECO:0007669"/>
    <property type="project" value="TreeGrafter"/>
</dbReference>
<dbReference type="GO" id="GO:0000932">
    <property type="term" value="C:P-body"/>
    <property type="evidence" value="ECO:0007669"/>
    <property type="project" value="TreeGrafter"/>
</dbReference>
<dbReference type="GO" id="GO:0005732">
    <property type="term" value="C:sno(s)RNA-containing ribonucleoprotein complex"/>
    <property type="evidence" value="ECO:0007669"/>
    <property type="project" value="TreeGrafter"/>
</dbReference>
<dbReference type="GO" id="GO:0005681">
    <property type="term" value="C:spliceosomal complex"/>
    <property type="evidence" value="ECO:0007669"/>
    <property type="project" value="UniProtKB-KW"/>
</dbReference>
<dbReference type="GO" id="GO:0046540">
    <property type="term" value="C:U4/U6 x U5 tri-snRNP complex"/>
    <property type="evidence" value="ECO:0007669"/>
    <property type="project" value="TreeGrafter"/>
</dbReference>
<dbReference type="GO" id="GO:0005688">
    <property type="term" value="C:U6 snRNP"/>
    <property type="evidence" value="ECO:0007669"/>
    <property type="project" value="TreeGrafter"/>
</dbReference>
<dbReference type="GO" id="GO:0003723">
    <property type="term" value="F:RNA binding"/>
    <property type="evidence" value="ECO:0007669"/>
    <property type="project" value="UniProtKB-KW"/>
</dbReference>
<dbReference type="GO" id="GO:0030490">
    <property type="term" value="P:maturation of SSU-rRNA"/>
    <property type="evidence" value="ECO:0007669"/>
    <property type="project" value="TreeGrafter"/>
</dbReference>
<dbReference type="GO" id="GO:0000398">
    <property type="term" value="P:mRNA splicing, via spliceosome"/>
    <property type="evidence" value="ECO:0007669"/>
    <property type="project" value="InterPro"/>
</dbReference>
<dbReference type="GO" id="GO:0008033">
    <property type="term" value="P:tRNA processing"/>
    <property type="evidence" value="ECO:0007669"/>
    <property type="project" value="UniProtKB-KW"/>
</dbReference>
<dbReference type="Gene3D" id="2.30.30.100">
    <property type="match status" value="1"/>
</dbReference>
<dbReference type="InterPro" id="IPR016487">
    <property type="entry name" value="Lsm6/sSmF"/>
</dbReference>
<dbReference type="InterPro" id="IPR010920">
    <property type="entry name" value="LSM_dom_sf"/>
</dbReference>
<dbReference type="InterPro" id="IPR047575">
    <property type="entry name" value="Sm"/>
</dbReference>
<dbReference type="InterPro" id="IPR001163">
    <property type="entry name" value="Sm_dom_euk/arc"/>
</dbReference>
<dbReference type="PANTHER" id="PTHR11021">
    <property type="entry name" value="SMALL NUCLEAR RIBONUCLEOPROTEIN F SNRNP-F"/>
    <property type="match status" value="1"/>
</dbReference>
<dbReference type="PANTHER" id="PTHR11021:SF1">
    <property type="entry name" value="U6 SNRNA-ASSOCIATED SM-LIKE PROTEIN LSM6"/>
    <property type="match status" value="1"/>
</dbReference>
<dbReference type="Pfam" id="PF01423">
    <property type="entry name" value="LSM"/>
    <property type="match status" value="1"/>
</dbReference>
<dbReference type="SMART" id="SM00651">
    <property type="entry name" value="Sm"/>
    <property type="match status" value="1"/>
</dbReference>
<dbReference type="SUPFAM" id="SSF50182">
    <property type="entry name" value="Sm-like ribonucleoproteins"/>
    <property type="match status" value="1"/>
</dbReference>
<dbReference type="PROSITE" id="PS52002">
    <property type="entry name" value="SM"/>
    <property type="match status" value="1"/>
</dbReference>
<keyword id="KW-0963">Cytoplasm</keyword>
<keyword id="KW-0507">mRNA processing</keyword>
<keyword id="KW-0508">mRNA splicing</keyword>
<keyword id="KW-0539">Nucleus</keyword>
<keyword id="KW-1185">Reference proteome</keyword>
<keyword id="KW-0687">Ribonucleoprotein</keyword>
<keyword id="KW-0694">RNA-binding</keyword>
<keyword id="KW-0698">rRNA processing</keyword>
<keyword id="KW-0747">Spliceosome</keyword>
<keyword id="KW-0819">tRNA processing</keyword>
<name>LSM6_KLULA</name>
<feature type="chain" id="PRO_0000333597" description="U6 snRNA-associated Sm-like protein LSm6">
    <location>
        <begin position="1"/>
        <end position="80"/>
    </location>
</feature>
<feature type="domain" description="Sm" evidence="2">
    <location>
        <begin position="7"/>
        <end position="80"/>
    </location>
</feature>
<organism>
    <name type="scientific">Kluyveromyces lactis (strain ATCC 8585 / CBS 2359 / DSM 70799 / NBRC 1267 / NRRL Y-1140 / WM37)</name>
    <name type="common">Yeast</name>
    <name type="synonym">Candida sphaerica</name>
    <dbReference type="NCBI Taxonomy" id="284590"/>
    <lineage>
        <taxon>Eukaryota</taxon>
        <taxon>Fungi</taxon>
        <taxon>Dikarya</taxon>
        <taxon>Ascomycota</taxon>
        <taxon>Saccharomycotina</taxon>
        <taxon>Saccharomycetes</taxon>
        <taxon>Saccharomycetales</taxon>
        <taxon>Saccharomycetaceae</taxon>
        <taxon>Kluyveromyces</taxon>
    </lineage>
</organism>
<protein>
    <recommendedName>
        <fullName>U6 snRNA-associated Sm-like protein LSm6</fullName>
    </recommendedName>
</protein>
<comment type="function">
    <text evidence="1">Component of LSm protein complexes, which are involved in RNA processing and may function in a chaperone-like manner, facilitating the efficient association of RNA processing factors with their substrates. Component of the cytoplasmic LSM1-LSM7 complex, which is thought to be involved in mRNA degradation by activating the decapping step in the 5'-to-3' mRNA decay pathway. Component of the nuclear LSM2-LSM8 complex, which is involved in splicing of nuclear mRNAs. LSM2-LSM8 associates with multiple snRNP complexes containing the U6 snRNA (U4/U6 di-snRNP, spliceosomal U4/U6.U5 tri-snRNP, and free U6 snRNP). It binds directly to the 3'-terminal U-tract of U6 snRNA and plays a role in the biogenesis and stability of the U6 snRNP and U4/U6 snRNP complexes. LSM2-LSM8 probably also is involved degradation of nuclear pre-mRNA by targeting them for decapping, and in processing of pre-tRNAs, pre-rRNAs and U3 snoRNA (By similarity).</text>
</comment>
<comment type="subunit">
    <text evidence="1">Component of the heptameric LSM1-LSM7 complex, which consists of LSM1, LSM2, LSM3, LSM4, LSM5, LSM6 and LSM7. Component of the heptameric LSM2-LSM8 complex, which consists of LSM2, LSM3, LSM4, LSM5, LSM6, LSM7 and LSM8. The LSm subunits form a seven-membered ring structure with a doughnut shape (By similarity).</text>
</comment>
<comment type="subcellular location">
    <subcellularLocation>
        <location evidence="1">Cytoplasm</location>
    </subcellularLocation>
    <subcellularLocation>
        <location evidence="1">Nucleus</location>
    </subcellularLocation>
</comment>
<comment type="similarity">
    <text evidence="3">Belongs to the snRNP Sm proteins family. SmF/LSm6 subfamily.</text>
</comment>
<proteinExistence type="inferred from homology"/>
<evidence type="ECO:0000250" key="1"/>
<evidence type="ECO:0000255" key="2">
    <source>
        <dbReference type="PROSITE-ProRule" id="PRU01346"/>
    </source>
</evidence>
<evidence type="ECO:0000305" key="3"/>